<comment type="function">
    <text>In vitro, can phosphorylate histone H1.</text>
</comment>
<comment type="catalytic activity">
    <reaction>
        <text>L-seryl-[protein] + ATP = O-phospho-L-seryl-[protein] + ADP + H(+)</text>
        <dbReference type="Rhea" id="RHEA:17989"/>
        <dbReference type="Rhea" id="RHEA-COMP:9863"/>
        <dbReference type="Rhea" id="RHEA-COMP:11604"/>
        <dbReference type="ChEBI" id="CHEBI:15378"/>
        <dbReference type="ChEBI" id="CHEBI:29999"/>
        <dbReference type="ChEBI" id="CHEBI:30616"/>
        <dbReference type="ChEBI" id="CHEBI:83421"/>
        <dbReference type="ChEBI" id="CHEBI:456216"/>
        <dbReference type="EC" id="2.7.11.1"/>
    </reaction>
</comment>
<comment type="catalytic activity">
    <reaction>
        <text>L-threonyl-[protein] + ATP = O-phospho-L-threonyl-[protein] + ADP + H(+)</text>
        <dbReference type="Rhea" id="RHEA:46608"/>
        <dbReference type="Rhea" id="RHEA-COMP:11060"/>
        <dbReference type="Rhea" id="RHEA-COMP:11605"/>
        <dbReference type="ChEBI" id="CHEBI:15378"/>
        <dbReference type="ChEBI" id="CHEBI:30013"/>
        <dbReference type="ChEBI" id="CHEBI:30616"/>
        <dbReference type="ChEBI" id="CHEBI:61977"/>
        <dbReference type="ChEBI" id="CHEBI:456216"/>
        <dbReference type="EC" id="2.7.11.1"/>
    </reaction>
</comment>
<comment type="developmental stage">
    <text>Expressed throughout the infection cycle beginning at 4 hours postinfection, first as a delayed-early gene and subsequently as a late gene.</text>
</comment>
<comment type="similarity">
    <text evidence="1">Belongs to the protein kinase superfamily. Ser/Thr protein kinase family.</text>
</comment>
<keyword id="KW-0067">ATP-binding</keyword>
<keyword id="KW-0418">Kinase</keyword>
<keyword id="KW-0547">Nucleotide-binding</keyword>
<keyword id="KW-1185">Reference proteome</keyword>
<keyword id="KW-0723">Serine/threonine-protein kinase</keyword>
<keyword id="KW-0808">Transferase</keyword>
<organism>
    <name type="scientific">Lymantria dispar multicapsid nuclear polyhedrosis virus</name>
    <name type="common">LdMNPV</name>
    <dbReference type="NCBI Taxonomy" id="10449"/>
    <lineage>
        <taxon>Viruses</taxon>
        <taxon>Viruses incertae sedis</taxon>
        <taxon>Naldaviricetes</taxon>
        <taxon>Lefavirales</taxon>
        <taxon>Baculoviridae</taxon>
        <taxon>Alphabaculovirus</taxon>
        <taxon>Alphabaculovirus lydisparis</taxon>
    </lineage>
</organism>
<gene>
    <name type="primary">PK1</name>
    <name type="synonym">PK-1</name>
    <name type="ordered locus">LdOrf-3</name>
</gene>
<organismHost>
    <name type="scientific">Lepidoptera</name>
    <name type="common">butterflies and moths</name>
    <dbReference type="NCBI Taxonomy" id="7088"/>
</organismHost>
<reference key="1">
    <citation type="journal article" date="1994" name="J. Virol.">
        <title>Identification and characterization of a protein kinase gene in the Lymantria dispar multinucleocapsid nuclear polyhedrosis virus.</title>
        <authorList>
            <person name="Bischoff D.S."/>
            <person name="Slavicek J.M."/>
        </authorList>
    </citation>
    <scope>NUCLEOTIDE SEQUENCE</scope>
    <source>
        <strain>5-6-1</strain>
    </source>
</reference>
<reference key="2">
    <citation type="journal article" date="1999" name="Virology">
        <title>Sequence and analysis of the genome of a baculovirus pathogenic for Lymantria dispar.</title>
        <authorList>
            <person name="Kuzio J."/>
            <person name="Pearson M.N."/>
            <person name="Harwood S.H."/>
            <person name="Funk C.J."/>
            <person name="Evans J.T."/>
            <person name="Slavicek J.M."/>
            <person name="Rohrmann G.F."/>
        </authorList>
    </citation>
    <scope>NUCLEOTIDE SEQUENCE [LARGE SCALE GENOMIC DNA]</scope>
    <source>
        <strain>Isolate Cl 5-6</strain>
    </source>
</reference>
<feature type="chain" id="PRO_0000086544" description="Serine/threonine-protein kinase 1">
    <location>
        <begin position="1"/>
        <end position="274"/>
    </location>
</feature>
<feature type="domain" description="Protein kinase" evidence="1">
    <location>
        <begin position="17"/>
        <end position="265"/>
    </location>
</feature>
<feature type="active site" description="Proton acceptor" evidence="1 2">
    <location>
        <position position="133"/>
    </location>
</feature>
<feature type="binding site" evidence="1">
    <location>
        <begin position="23"/>
        <end position="31"/>
    </location>
    <ligand>
        <name>ATP</name>
        <dbReference type="ChEBI" id="CHEBI:30616"/>
    </ligand>
</feature>
<feature type="binding site" evidence="1">
    <location>
        <position position="46"/>
    </location>
    <ligand>
        <name>ATP</name>
        <dbReference type="ChEBI" id="CHEBI:30616"/>
    </ligand>
</feature>
<dbReference type="EC" id="2.7.11.1"/>
<dbReference type="EMBL" id="U04322">
    <property type="protein sequence ID" value="AAC18617.1"/>
    <property type="molecule type" value="Unassigned_DNA"/>
</dbReference>
<dbReference type="EMBL" id="AF081810">
    <property type="protein sequence ID" value="AAC70188.1"/>
    <property type="molecule type" value="Genomic_DNA"/>
</dbReference>
<dbReference type="PIR" id="T30350">
    <property type="entry name" value="T30350"/>
</dbReference>
<dbReference type="RefSeq" id="NP_047639.1">
    <property type="nucleotide sequence ID" value="NC_001973.1"/>
</dbReference>
<dbReference type="SMR" id="P41720"/>
<dbReference type="KEGG" id="vg:1488482"/>
<dbReference type="OrthoDB" id="8955at10239"/>
<dbReference type="BRENDA" id="2.7.11.1">
    <property type="organism ID" value="3111"/>
</dbReference>
<dbReference type="Proteomes" id="UP000203997">
    <property type="component" value="Genome"/>
</dbReference>
<dbReference type="GO" id="GO:0005524">
    <property type="term" value="F:ATP binding"/>
    <property type="evidence" value="ECO:0007669"/>
    <property type="project" value="UniProtKB-KW"/>
</dbReference>
<dbReference type="GO" id="GO:0106310">
    <property type="term" value="F:protein serine kinase activity"/>
    <property type="evidence" value="ECO:0007669"/>
    <property type="project" value="RHEA"/>
</dbReference>
<dbReference type="GO" id="GO:0004674">
    <property type="term" value="F:protein serine/threonine kinase activity"/>
    <property type="evidence" value="ECO:0007669"/>
    <property type="project" value="UniProtKB-KW"/>
</dbReference>
<dbReference type="Gene3D" id="3.30.200.20">
    <property type="entry name" value="Phosphorylase Kinase, domain 1"/>
    <property type="match status" value="1"/>
</dbReference>
<dbReference type="Gene3D" id="1.10.510.10">
    <property type="entry name" value="Transferase(Phosphotransferase) domain 1"/>
    <property type="match status" value="1"/>
</dbReference>
<dbReference type="InterPro" id="IPR011009">
    <property type="entry name" value="Kinase-like_dom_sf"/>
</dbReference>
<dbReference type="InterPro" id="IPR000719">
    <property type="entry name" value="Prot_kinase_dom"/>
</dbReference>
<dbReference type="InterPro" id="IPR008271">
    <property type="entry name" value="Ser/Thr_kinase_AS"/>
</dbReference>
<dbReference type="InterPro" id="IPR050236">
    <property type="entry name" value="Ser_Thr_kinase_AGC"/>
</dbReference>
<dbReference type="PANTHER" id="PTHR24356">
    <property type="entry name" value="SERINE/THREONINE-PROTEIN KINASE"/>
    <property type="match status" value="1"/>
</dbReference>
<dbReference type="Pfam" id="PF00069">
    <property type="entry name" value="Pkinase"/>
    <property type="match status" value="1"/>
</dbReference>
<dbReference type="SMART" id="SM00220">
    <property type="entry name" value="S_TKc"/>
    <property type="match status" value="1"/>
</dbReference>
<dbReference type="SUPFAM" id="SSF56112">
    <property type="entry name" value="Protein kinase-like (PK-like)"/>
    <property type="match status" value="1"/>
</dbReference>
<dbReference type="PROSITE" id="PS50011">
    <property type="entry name" value="PROTEIN_KINASE_DOM"/>
    <property type="match status" value="1"/>
</dbReference>
<dbReference type="PROSITE" id="PS00108">
    <property type="entry name" value="PROTEIN_KINASE_ST"/>
    <property type="match status" value="1"/>
</dbReference>
<accession>P41720</accession>
<name>PK1_NPVLD</name>
<proteinExistence type="evidence at transcript level"/>
<sequence length="274" mass="32438">MDALIGDFADFHKECSARTALHLVNGKFGKVSVWKHGPTQKSFFYKRIEHKHFNAIEPFVHHLMKFNKYFLRLFYSLHSLREHLLVMDYIPDGDLFDLMQTEPRLREPEISLIAYQLIDALQALHKHNVVHNDVKLENVLYRRFEQIYVCDYGLCKIAGSPSTFEGTVDYFSPEKINKHAAAVHFDWWAVGVLLYEISTGKHPFKLDQDESLDVETLHKRQIQLDVTFPADFDNPFLEEFICFLLGYCYDYRAHSYEVIQKNTYWKSIVHWKQR</sequence>
<protein>
    <recommendedName>
        <fullName>Serine/threonine-protein kinase 1</fullName>
        <ecNumber>2.7.11.1</ecNumber>
    </recommendedName>
</protein>
<evidence type="ECO:0000255" key="1">
    <source>
        <dbReference type="PROSITE-ProRule" id="PRU00159"/>
    </source>
</evidence>
<evidence type="ECO:0000255" key="2">
    <source>
        <dbReference type="PROSITE-ProRule" id="PRU10027"/>
    </source>
</evidence>